<gene>
    <name type="primary">MRPS18A</name>
</gene>
<organism evidence="4">
    <name type="scientific">Bos taurus</name>
    <name type="common">Bovine</name>
    <dbReference type="NCBI Taxonomy" id="9913"/>
    <lineage>
        <taxon>Eukaryota</taxon>
        <taxon>Metazoa</taxon>
        <taxon>Chordata</taxon>
        <taxon>Craniata</taxon>
        <taxon>Vertebrata</taxon>
        <taxon>Euteleostomi</taxon>
        <taxon>Mammalia</taxon>
        <taxon>Eutheria</taxon>
        <taxon>Laurasiatheria</taxon>
        <taxon>Artiodactyla</taxon>
        <taxon>Ruminantia</taxon>
        <taxon>Pecora</taxon>
        <taxon>Bovidae</taxon>
        <taxon>Bovinae</taxon>
        <taxon>Bos</taxon>
    </lineage>
</organism>
<reference key="1">
    <citation type="submission" date="2007-06" db="EMBL/GenBank/DDBJ databases">
        <authorList>
            <consortium name="NIH - Mammalian Gene Collection (MGC) project"/>
        </authorList>
    </citation>
    <scope>NUCLEOTIDE SEQUENCE [LARGE SCALE MRNA]</scope>
    <source>
        <strain>Hereford</strain>
        <tissue>Hypothalamus</tissue>
    </source>
</reference>
<reference key="2">
    <citation type="journal article" date="2001" name="J. Biol. Chem.">
        <title>Proteomic analysis of the mammalian mitochondrial ribosome. Identification of protein components in the 28S small subunit.</title>
        <authorList>
            <person name="Suzuki T."/>
            <person name="Terasaki M."/>
            <person name="Takemoto-Hori C."/>
            <person name="Hanada T."/>
            <person name="Ueda T."/>
            <person name="Wada A."/>
            <person name="Watanabe K."/>
        </authorList>
    </citation>
    <scope>PROTEIN SEQUENCE OF 35-47</scope>
    <scope>SUBCELLULAR LOCATION</scope>
    <scope>SUBUNIT</scope>
</reference>
<reference evidence="4" key="3">
    <citation type="journal article" date="2001" name="J. Biol. Chem.">
        <title>The small subunit of the mammalian mitochondrial ribosome: identification of the full complement of ribosomal proteins present.</title>
        <authorList>
            <person name="Koc E.C."/>
            <person name="Burkhart W."/>
            <person name="Blackburn K."/>
            <person name="Moseley A."/>
            <person name="Spremulli L.L."/>
        </authorList>
    </citation>
    <scope>PROTEIN SEQUENCE OF 174-196</scope>
    <scope>SUBCELLULAR LOCATION</scope>
    <scope>SUBUNIT</scope>
    <source>
        <tissue>Liver</tissue>
    </source>
</reference>
<reference evidence="5" key="4">
    <citation type="journal article" date="2014" name="Proc. Natl. Acad. Sci. U.S.A.">
        <title>Cryo-EM structure of the small subunit of the mammalian mitochondrial ribosome.</title>
        <authorList>
            <person name="Kaushal P.S."/>
            <person name="Sharma M.R."/>
            <person name="Booth T.M."/>
            <person name="Haque E.M."/>
            <person name="Tung C.S."/>
            <person name="Sanbonmatsu K.Y."/>
            <person name="Spremulli L.L."/>
            <person name="Agrawal R.K."/>
        </authorList>
    </citation>
    <scope>STRUCTURE BY ELECTRON MICROSCOPY (7.00 ANGSTROMS)</scope>
    <scope>SUBCELLULAR LOCATION</scope>
    <scope>SUBUNIT</scope>
</reference>
<feature type="transit peptide" description="Mitochondrion" evidence="2">
    <location>
        <begin position="1"/>
        <end position="34"/>
    </location>
</feature>
<feature type="chain" id="PRO_0000111315" description="Large ribosomal subunit protein mL66">
    <location>
        <begin position="35"/>
        <end position="196"/>
    </location>
</feature>
<accession>P82919</accession>
<accession>A6QLH4</accession>
<proteinExistence type="evidence at protein level"/>
<protein>
    <recommendedName>
        <fullName evidence="4">Large ribosomal subunit protein mL66</fullName>
    </recommendedName>
    <alternativeName>
        <fullName>28S ribosomal protein S18-3, mitochondrial</fullName>
        <shortName>MRP-S18-3</shortName>
    </alternativeName>
    <alternativeName>
        <fullName>28S ribosomal protein S18a, mitochondrial</fullName>
        <shortName>MRP-S18-a</shortName>
        <shortName>Mrps18a</shortName>
        <shortName>S18mt-a</shortName>
    </alternativeName>
</protein>
<dbReference type="EMBL" id="BC147966">
    <property type="protein sequence ID" value="AAI47967.1"/>
    <property type="molecule type" value="mRNA"/>
</dbReference>
<dbReference type="RefSeq" id="NP_001094699.1">
    <property type="nucleotide sequence ID" value="NM_001101229.2"/>
</dbReference>
<dbReference type="PDB" id="3JD5">
    <property type="method" value="EM"/>
    <property type="resolution" value="7.00 A"/>
    <property type="chains" value="R=1-196"/>
</dbReference>
<dbReference type="PDBsum" id="3JD5"/>
<dbReference type="SMR" id="P82919"/>
<dbReference type="CORUM" id="P82919"/>
<dbReference type="FunCoup" id="P82919">
    <property type="interactions" value="611"/>
</dbReference>
<dbReference type="IntAct" id="P82919">
    <property type="interactions" value="1"/>
</dbReference>
<dbReference type="STRING" id="9913.ENSBTAP00000051782"/>
<dbReference type="PaxDb" id="9913-ENSBTAP00000051782"/>
<dbReference type="GeneID" id="614102"/>
<dbReference type="KEGG" id="bta:614102"/>
<dbReference type="CTD" id="55168"/>
<dbReference type="eggNOG" id="KOG3162">
    <property type="taxonomic scope" value="Eukaryota"/>
</dbReference>
<dbReference type="InParanoid" id="P82919"/>
<dbReference type="OrthoDB" id="10054543at2759"/>
<dbReference type="Proteomes" id="UP000009136">
    <property type="component" value="Unplaced"/>
</dbReference>
<dbReference type="GO" id="GO:0005743">
    <property type="term" value="C:mitochondrial inner membrane"/>
    <property type="evidence" value="ECO:0000304"/>
    <property type="project" value="Reactome"/>
</dbReference>
<dbReference type="GO" id="GO:0005763">
    <property type="term" value="C:mitochondrial small ribosomal subunit"/>
    <property type="evidence" value="ECO:0007005"/>
    <property type="project" value="UniProtKB"/>
</dbReference>
<dbReference type="GO" id="GO:0070181">
    <property type="term" value="F:small ribosomal subunit rRNA binding"/>
    <property type="evidence" value="ECO:0000318"/>
    <property type="project" value="GO_Central"/>
</dbReference>
<dbReference type="GO" id="GO:0003735">
    <property type="term" value="F:structural constituent of ribosome"/>
    <property type="evidence" value="ECO:0007005"/>
    <property type="project" value="UniProtKB"/>
</dbReference>
<dbReference type="GO" id="GO:0032543">
    <property type="term" value="P:mitochondrial translation"/>
    <property type="evidence" value="ECO:0007005"/>
    <property type="project" value="UniProtKB"/>
</dbReference>
<dbReference type="GO" id="GO:0006412">
    <property type="term" value="P:translation"/>
    <property type="evidence" value="ECO:0000318"/>
    <property type="project" value="GO_Central"/>
</dbReference>
<dbReference type="FunFam" id="4.10.640.10:FF:000011">
    <property type="entry name" value="28S ribosomal protein S18a, mitochondrial"/>
    <property type="match status" value="1"/>
</dbReference>
<dbReference type="Gene3D" id="4.10.640.10">
    <property type="entry name" value="Ribosomal protein S18"/>
    <property type="match status" value="1"/>
</dbReference>
<dbReference type="InterPro" id="IPR001648">
    <property type="entry name" value="Ribosomal_bS18"/>
</dbReference>
<dbReference type="InterPro" id="IPR036870">
    <property type="entry name" value="Ribosomal_bS18_sf"/>
</dbReference>
<dbReference type="PANTHER" id="PTHR13479">
    <property type="entry name" value="30S RIBOSOMAL PROTEIN S18"/>
    <property type="match status" value="1"/>
</dbReference>
<dbReference type="PANTHER" id="PTHR13479:SF66">
    <property type="entry name" value="LARGE RIBOSOMAL SUBUNIT PROTEIN ML66"/>
    <property type="match status" value="1"/>
</dbReference>
<dbReference type="Pfam" id="PF01084">
    <property type="entry name" value="Ribosomal_S18"/>
    <property type="match status" value="1"/>
</dbReference>
<dbReference type="SUPFAM" id="SSF46911">
    <property type="entry name" value="Ribosomal protein S18"/>
    <property type="match status" value="1"/>
</dbReference>
<sequence length="196" mass="22281">MAALNVLVSGCGRFLRGLLTGPTVTSWARPPARGFREVVEIQEGKTTIIEGRITGTPKESPNPPNPSGQCPICRWNLKHKYSYEDVLLLSQFIRPHGGMLPRSITGLCQEEHRKIEECVKMAHRAGLLPNHRPKLPEGFFPKTRPRLNRYLTRWSPRSVKPIYNKGHRWNKVRMAVGSPLLKDNVSYTGRPLVLYH</sequence>
<name>RT18A_BOVIN</name>
<comment type="subunit">
    <text evidence="1 2 3">Component of the mitochondrial ribosome small subunit (28S) which comprises a 12S rRNA and about 30 distinct proteins.</text>
</comment>
<comment type="subcellular location">
    <subcellularLocation>
        <location evidence="1 2 3">Mitochondrion</location>
    </subcellularLocation>
</comment>
<comment type="similarity">
    <text evidence="4">Belongs to the bacterial ribosomal protein bS18 family. Mitochondrion-specific ribosomal protein mL66 subfamily.</text>
</comment>
<evidence type="ECO:0000269" key="1">
    <source>
    </source>
</evidence>
<evidence type="ECO:0000269" key="2">
    <source>
    </source>
</evidence>
<evidence type="ECO:0000269" key="3">
    <source>
    </source>
</evidence>
<evidence type="ECO:0000305" key="4"/>
<evidence type="ECO:0007744" key="5">
    <source>
        <dbReference type="PDB" id="3JD5"/>
    </source>
</evidence>
<keyword id="KW-0002">3D-structure</keyword>
<keyword id="KW-0903">Direct protein sequencing</keyword>
<keyword id="KW-0496">Mitochondrion</keyword>
<keyword id="KW-1185">Reference proteome</keyword>
<keyword id="KW-0687">Ribonucleoprotein</keyword>
<keyword id="KW-0689">Ribosomal protein</keyword>
<keyword id="KW-0809">Transit peptide</keyword>